<comment type="function">
    <text evidence="1">Catalyzes the 2-thiolation of uridine at the wobble position (U34) of tRNA, leading to the formation of s(2)U34.</text>
</comment>
<comment type="catalytic activity">
    <reaction evidence="1">
        <text>S-sulfanyl-L-cysteinyl-[protein] + uridine(34) in tRNA + AH2 + ATP = 2-thiouridine(34) in tRNA + L-cysteinyl-[protein] + A + AMP + diphosphate + H(+)</text>
        <dbReference type="Rhea" id="RHEA:47032"/>
        <dbReference type="Rhea" id="RHEA-COMP:10131"/>
        <dbReference type="Rhea" id="RHEA-COMP:11726"/>
        <dbReference type="Rhea" id="RHEA-COMP:11727"/>
        <dbReference type="Rhea" id="RHEA-COMP:11728"/>
        <dbReference type="ChEBI" id="CHEBI:13193"/>
        <dbReference type="ChEBI" id="CHEBI:15378"/>
        <dbReference type="ChEBI" id="CHEBI:17499"/>
        <dbReference type="ChEBI" id="CHEBI:29950"/>
        <dbReference type="ChEBI" id="CHEBI:30616"/>
        <dbReference type="ChEBI" id="CHEBI:33019"/>
        <dbReference type="ChEBI" id="CHEBI:61963"/>
        <dbReference type="ChEBI" id="CHEBI:65315"/>
        <dbReference type="ChEBI" id="CHEBI:87170"/>
        <dbReference type="ChEBI" id="CHEBI:456215"/>
        <dbReference type="EC" id="2.8.1.13"/>
    </reaction>
</comment>
<comment type="subcellular location">
    <subcellularLocation>
        <location evidence="1">Cytoplasm</location>
    </subcellularLocation>
</comment>
<comment type="similarity">
    <text evidence="1">Belongs to the MnmA/TRMU family.</text>
</comment>
<accession>P75365</accession>
<proteinExistence type="inferred from homology"/>
<gene>
    <name evidence="1" type="primary">mnmA</name>
    <name type="synonym">trmU</name>
    <name type="ordered locus">MPN_422</name>
    <name type="ORF">MP419</name>
</gene>
<feature type="chain" id="PRO_0000121654" description="tRNA-specific 2-thiouridylase MnmA">
    <location>
        <begin position="1"/>
        <end position="370"/>
    </location>
</feature>
<feature type="region of interest" description="Interaction with target base in tRNA" evidence="1">
    <location>
        <begin position="107"/>
        <end position="109"/>
    </location>
</feature>
<feature type="region of interest" description="Interaction with tRNA" evidence="1">
    <location>
        <begin position="159"/>
        <end position="161"/>
    </location>
</feature>
<feature type="active site" description="Nucleophile" evidence="1">
    <location>
        <position position="112"/>
    </location>
</feature>
<feature type="active site" description="Cysteine persulfide intermediate" evidence="1">
    <location>
        <position position="209"/>
    </location>
</feature>
<feature type="binding site" evidence="1">
    <location>
        <begin position="9"/>
        <end position="16"/>
    </location>
    <ligand>
        <name>ATP</name>
        <dbReference type="ChEBI" id="CHEBI:30616"/>
    </ligand>
</feature>
<feature type="binding site" evidence="1">
    <location>
        <position position="35"/>
    </location>
    <ligand>
        <name>ATP</name>
        <dbReference type="ChEBI" id="CHEBI:30616"/>
    </ligand>
</feature>
<feature type="binding site" evidence="1">
    <location>
        <position position="137"/>
    </location>
    <ligand>
        <name>ATP</name>
        <dbReference type="ChEBI" id="CHEBI:30616"/>
    </ligand>
</feature>
<feature type="site" description="Interaction with tRNA" evidence="1">
    <location>
        <position position="138"/>
    </location>
</feature>
<feature type="site" description="Interaction with tRNA" evidence="1">
    <location>
        <position position="348"/>
    </location>
</feature>
<feature type="disulfide bond" description="Alternate" evidence="1">
    <location>
        <begin position="112"/>
        <end position="209"/>
    </location>
</feature>
<evidence type="ECO:0000255" key="1">
    <source>
        <dbReference type="HAMAP-Rule" id="MF_00144"/>
    </source>
</evidence>
<protein>
    <recommendedName>
        <fullName evidence="1">tRNA-specific 2-thiouridylase MnmA</fullName>
        <ecNumber evidence="1">2.8.1.13</ecNumber>
    </recommendedName>
</protein>
<dbReference type="EC" id="2.8.1.13" evidence="1"/>
<dbReference type="EMBL" id="U00089">
    <property type="protein sequence ID" value="AAB96067.1"/>
    <property type="molecule type" value="Genomic_DNA"/>
</dbReference>
<dbReference type="PIR" id="S73745">
    <property type="entry name" value="S73745"/>
</dbReference>
<dbReference type="RefSeq" id="NP_110110.1">
    <property type="nucleotide sequence ID" value="NC_000912.1"/>
</dbReference>
<dbReference type="RefSeq" id="WP_010874778.1">
    <property type="nucleotide sequence ID" value="NZ_OU342337.1"/>
</dbReference>
<dbReference type="SMR" id="P75365"/>
<dbReference type="STRING" id="272634.MPN_422"/>
<dbReference type="EnsemblBacteria" id="AAB96067">
    <property type="protein sequence ID" value="AAB96067"/>
    <property type="gene ID" value="MPN_422"/>
</dbReference>
<dbReference type="GeneID" id="66608911"/>
<dbReference type="KEGG" id="mpn:MPN_422"/>
<dbReference type="PATRIC" id="fig|272634.6.peg.457"/>
<dbReference type="HOGENOM" id="CLU_035188_1_0_14"/>
<dbReference type="OrthoDB" id="9800696at2"/>
<dbReference type="BioCyc" id="MPNE272634:G1GJ3-683-MONOMER"/>
<dbReference type="Proteomes" id="UP000000808">
    <property type="component" value="Chromosome"/>
</dbReference>
<dbReference type="GO" id="GO:0005737">
    <property type="term" value="C:cytoplasm"/>
    <property type="evidence" value="ECO:0007669"/>
    <property type="project" value="UniProtKB-SubCell"/>
</dbReference>
<dbReference type="GO" id="GO:0005524">
    <property type="term" value="F:ATP binding"/>
    <property type="evidence" value="ECO:0007669"/>
    <property type="project" value="UniProtKB-KW"/>
</dbReference>
<dbReference type="GO" id="GO:0000049">
    <property type="term" value="F:tRNA binding"/>
    <property type="evidence" value="ECO:0007669"/>
    <property type="project" value="UniProtKB-KW"/>
</dbReference>
<dbReference type="GO" id="GO:0103016">
    <property type="term" value="F:tRNA-uridine 2-sulfurtransferase activity"/>
    <property type="evidence" value="ECO:0007669"/>
    <property type="project" value="UniProtKB-EC"/>
</dbReference>
<dbReference type="GO" id="GO:0002143">
    <property type="term" value="P:tRNA wobble position uridine thiolation"/>
    <property type="evidence" value="ECO:0007669"/>
    <property type="project" value="TreeGrafter"/>
</dbReference>
<dbReference type="CDD" id="cd01998">
    <property type="entry name" value="MnmA_TRMU-like"/>
    <property type="match status" value="1"/>
</dbReference>
<dbReference type="FunFam" id="2.30.30.280:FF:000001">
    <property type="entry name" value="tRNA-specific 2-thiouridylase MnmA"/>
    <property type="match status" value="1"/>
</dbReference>
<dbReference type="Gene3D" id="2.30.30.280">
    <property type="entry name" value="Adenine nucleotide alpha hydrolases-like domains"/>
    <property type="match status" value="1"/>
</dbReference>
<dbReference type="Gene3D" id="3.40.50.620">
    <property type="entry name" value="HUPs"/>
    <property type="match status" value="1"/>
</dbReference>
<dbReference type="Gene3D" id="2.40.30.10">
    <property type="entry name" value="Translation factors"/>
    <property type="match status" value="1"/>
</dbReference>
<dbReference type="HAMAP" id="MF_00144">
    <property type="entry name" value="tRNA_thiouridyl_MnmA"/>
    <property type="match status" value="1"/>
</dbReference>
<dbReference type="InterPro" id="IPR004506">
    <property type="entry name" value="MnmA-like"/>
</dbReference>
<dbReference type="InterPro" id="IPR046885">
    <property type="entry name" value="MnmA-like_C"/>
</dbReference>
<dbReference type="InterPro" id="IPR046884">
    <property type="entry name" value="MnmA-like_central"/>
</dbReference>
<dbReference type="InterPro" id="IPR023382">
    <property type="entry name" value="MnmA-like_central_sf"/>
</dbReference>
<dbReference type="InterPro" id="IPR014729">
    <property type="entry name" value="Rossmann-like_a/b/a_fold"/>
</dbReference>
<dbReference type="NCBIfam" id="NF001138">
    <property type="entry name" value="PRK00143.1"/>
    <property type="match status" value="1"/>
</dbReference>
<dbReference type="NCBIfam" id="TIGR00420">
    <property type="entry name" value="trmU"/>
    <property type="match status" value="1"/>
</dbReference>
<dbReference type="PANTHER" id="PTHR11933:SF5">
    <property type="entry name" value="MITOCHONDRIAL TRNA-SPECIFIC 2-THIOURIDYLASE 1"/>
    <property type="match status" value="1"/>
</dbReference>
<dbReference type="PANTHER" id="PTHR11933">
    <property type="entry name" value="TRNA 5-METHYLAMINOMETHYL-2-THIOURIDYLATE -METHYLTRANSFERASE"/>
    <property type="match status" value="1"/>
</dbReference>
<dbReference type="Pfam" id="PF03054">
    <property type="entry name" value="tRNA_Me_trans"/>
    <property type="match status" value="1"/>
</dbReference>
<dbReference type="Pfam" id="PF20258">
    <property type="entry name" value="tRNA_Me_trans_C"/>
    <property type="match status" value="1"/>
</dbReference>
<dbReference type="Pfam" id="PF20259">
    <property type="entry name" value="tRNA_Me_trans_M"/>
    <property type="match status" value="1"/>
</dbReference>
<dbReference type="SUPFAM" id="SSF52402">
    <property type="entry name" value="Adenine nucleotide alpha hydrolases-like"/>
    <property type="match status" value="1"/>
</dbReference>
<organism>
    <name type="scientific">Mycoplasma pneumoniae (strain ATCC 29342 / M129 / Subtype 1)</name>
    <name type="common">Mycoplasmoides pneumoniae</name>
    <dbReference type="NCBI Taxonomy" id="272634"/>
    <lineage>
        <taxon>Bacteria</taxon>
        <taxon>Bacillati</taxon>
        <taxon>Mycoplasmatota</taxon>
        <taxon>Mycoplasmoidales</taxon>
        <taxon>Mycoplasmoidaceae</taxon>
        <taxon>Mycoplasmoides</taxon>
    </lineage>
</organism>
<reference key="1">
    <citation type="journal article" date="1996" name="Nucleic Acids Res.">
        <title>Complete sequence analysis of the genome of the bacterium Mycoplasma pneumoniae.</title>
        <authorList>
            <person name="Himmelreich R."/>
            <person name="Hilbert H."/>
            <person name="Plagens H."/>
            <person name="Pirkl E."/>
            <person name="Li B.-C."/>
            <person name="Herrmann R."/>
        </authorList>
    </citation>
    <scope>NUCLEOTIDE SEQUENCE [LARGE SCALE GENOMIC DNA]</scope>
    <source>
        <strain>ATCC 29342 / M129 / Subtype 1</strain>
    </source>
</reference>
<sequence length="370" mass="41773">MQNKTVFVGISGGVDSAVSALLLKQQYREVIGIFMECWDNTLNNDQLGHRAFNEHKSGCSSKEDFREAQAIAQLLGIKLIKQNLVEPYWKQVFLPTIDAFKNGLTPNPDMLCNRLIKFGLMRDYCKQLDPNSDFATGHYAALSWDNNQPLLAIPKDKHKDQTYFLAHVKPAQLQDVVFPLAHLLKTEVRQIALAHHFSVATKKDSTGICFIGERHFSDFLKNYLPVKPGVIYDWKTQRQLGSHEGVWFYTTGQRSGLNLGGQAARNFVVEKDLKTNTLYVSSDPEDLQRRGITLSHFNWLYQPNPLTQTVLVRIRHAQPLVQGHITVQPNNVVQVQLDQPIDRVTNGQYGVLYTQNGICLGSGIITASQI</sequence>
<keyword id="KW-0067">ATP-binding</keyword>
<keyword id="KW-0963">Cytoplasm</keyword>
<keyword id="KW-1015">Disulfide bond</keyword>
<keyword id="KW-0547">Nucleotide-binding</keyword>
<keyword id="KW-1185">Reference proteome</keyword>
<keyword id="KW-0694">RNA-binding</keyword>
<keyword id="KW-0808">Transferase</keyword>
<keyword id="KW-0819">tRNA processing</keyword>
<keyword id="KW-0820">tRNA-binding</keyword>
<name>MNMA_MYCPN</name>